<dbReference type="EMBL" id="CR382126">
    <property type="protein sequence ID" value="CAG98732.1"/>
    <property type="molecule type" value="Genomic_DNA"/>
</dbReference>
<dbReference type="RefSeq" id="XP_456024.1">
    <property type="nucleotide sequence ID" value="XM_456024.1"/>
</dbReference>
<dbReference type="SMR" id="Q6CJ65"/>
<dbReference type="FunCoup" id="Q6CJ65">
    <property type="interactions" value="225"/>
</dbReference>
<dbReference type="STRING" id="284590.Q6CJ65"/>
<dbReference type="PaxDb" id="284590-Q6CJ65"/>
<dbReference type="KEGG" id="kla:KLLA0_F21032g"/>
<dbReference type="eggNOG" id="KOG1697">
    <property type="taxonomic scope" value="Eukaryota"/>
</dbReference>
<dbReference type="HOGENOM" id="CLU_036531_0_0_1"/>
<dbReference type="InParanoid" id="Q6CJ65"/>
<dbReference type="OMA" id="RESAMWA"/>
<dbReference type="Proteomes" id="UP000000598">
    <property type="component" value="Chromosome F"/>
</dbReference>
<dbReference type="GO" id="GO:0005763">
    <property type="term" value="C:mitochondrial small ribosomal subunit"/>
    <property type="evidence" value="ECO:0007669"/>
    <property type="project" value="TreeGrafter"/>
</dbReference>
<dbReference type="GO" id="GO:0003723">
    <property type="term" value="F:RNA binding"/>
    <property type="evidence" value="ECO:0007669"/>
    <property type="project" value="TreeGrafter"/>
</dbReference>
<dbReference type="GO" id="GO:0003735">
    <property type="term" value="F:structural constituent of ribosome"/>
    <property type="evidence" value="ECO:0007669"/>
    <property type="project" value="InterPro"/>
</dbReference>
<dbReference type="GO" id="GO:0006412">
    <property type="term" value="P:translation"/>
    <property type="evidence" value="ECO:0007669"/>
    <property type="project" value="InterPro"/>
</dbReference>
<dbReference type="FunFam" id="3.30.230.10:FF:000001">
    <property type="entry name" value="30S ribosomal protein S9"/>
    <property type="match status" value="1"/>
</dbReference>
<dbReference type="Gene3D" id="3.30.230.10">
    <property type="match status" value="1"/>
</dbReference>
<dbReference type="InterPro" id="IPR020568">
    <property type="entry name" value="Ribosomal_Su5_D2-typ_SF"/>
</dbReference>
<dbReference type="InterPro" id="IPR000754">
    <property type="entry name" value="Ribosomal_uS9"/>
</dbReference>
<dbReference type="InterPro" id="IPR023035">
    <property type="entry name" value="Ribosomal_uS9_bac/plastid"/>
</dbReference>
<dbReference type="InterPro" id="IPR020574">
    <property type="entry name" value="Ribosomal_uS9_CS"/>
</dbReference>
<dbReference type="InterPro" id="IPR014721">
    <property type="entry name" value="Ribsml_uS5_D2-typ_fold_subgr"/>
</dbReference>
<dbReference type="NCBIfam" id="NF001099">
    <property type="entry name" value="PRK00132.1"/>
    <property type="match status" value="1"/>
</dbReference>
<dbReference type="PANTHER" id="PTHR21569">
    <property type="entry name" value="RIBOSOMAL PROTEIN S9"/>
    <property type="match status" value="1"/>
</dbReference>
<dbReference type="PANTHER" id="PTHR21569:SF1">
    <property type="entry name" value="SMALL RIBOSOMAL SUBUNIT PROTEIN US9M"/>
    <property type="match status" value="1"/>
</dbReference>
<dbReference type="Pfam" id="PF00380">
    <property type="entry name" value="Ribosomal_S9"/>
    <property type="match status" value="1"/>
</dbReference>
<dbReference type="SUPFAM" id="SSF54211">
    <property type="entry name" value="Ribosomal protein S5 domain 2-like"/>
    <property type="match status" value="1"/>
</dbReference>
<dbReference type="PROSITE" id="PS00360">
    <property type="entry name" value="RIBOSOMAL_S9"/>
    <property type="match status" value="1"/>
</dbReference>
<keyword id="KW-0496">Mitochondrion</keyword>
<keyword id="KW-1185">Reference proteome</keyword>
<keyword id="KW-0687">Ribonucleoprotein</keyword>
<keyword id="KW-0689">Ribosomal protein</keyword>
<keyword id="KW-0809">Transit peptide</keyword>
<accession>Q6CJ65</accession>
<sequence length="297" mass="33715">MFSRLTGVSLRQGLTVQKRLFSYARPLFNSSGSERTGSGSRQYNDGARAGAEYGYTGTRIVPKLSTFYSANPHHEAHIDNLEALLRKYIKYPTVQVEERPSWLSLQEYALIGGGSRLKSTQYKQLLFMLNRLNSIDPQLVTDEISNTLAKYHKKTKLQPQRDTLKQLDEFGRSLAIGRRKTSTAKVYVVRGEGKILVNDRQLNDYFVKMKDRESVMYPLKAIDSVGKYNVFAMVSGGGITGQADALMHAIGKALVAFNPLLKTRLHRSGVLTRDYRHVERKKPGKRKARKMPTWVKR</sequence>
<comment type="subcellular location">
    <subcellularLocation>
        <location evidence="3">Mitochondrion</location>
    </subcellularLocation>
</comment>
<comment type="similarity">
    <text evidence="3">Belongs to the universal ribosomal protein uS9 family.</text>
</comment>
<name>RT09_KLULA</name>
<proteinExistence type="inferred from homology"/>
<reference key="1">
    <citation type="journal article" date="2004" name="Nature">
        <title>Genome evolution in yeasts.</title>
        <authorList>
            <person name="Dujon B."/>
            <person name="Sherman D."/>
            <person name="Fischer G."/>
            <person name="Durrens P."/>
            <person name="Casaregola S."/>
            <person name="Lafontaine I."/>
            <person name="de Montigny J."/>
            <person name="Marck C."/>
            <person name="Neuveglise C."/>
            <person name="Talla E."/>
            <person name="Goffard N."/>
            <person name="Frangeul L."/>
            <person name="Aigle M."/>
            <person name="Anthouard V."/>
            <person name="Babour A."/>
            <person name="Barbe V."/>
            <person name="Barnay S."/>
            <person name="Blanchin S."/>
            <person name="Beckerich J.-M."/>
            <person name="Beyne E."/>
            <person name="Bleykasten C."/>
            <person name="Boisrame A."/>
            <person name="Boyer J."/>
            <person name="Cattolico L."/>
            <person name="Confanioleri F."/>
            <person name="de Daruvar A."/>
            <person name="Despons L."/>
            <person name="Fabre E."/>
            <person name="Fairhead C."/>
            <person name="Ferry-Dumazet H."/>
            <person name="Groppi A."/>
            <person name="Hantraye F."/>
            <person name="Hennequin C."/>
            <person name="Jauniaux N."/>
            <person name="Joyet P."/>
            <person name="Kachouri R."/>
            <person name="Kerrest A."/>
            <person name="Koszul R."/>
            <person name="Lemaire M."/>
            <person name="Lesur I."/>
            <person name="Ma L."/>
            <person name="Muller H."/>
            <person name="Nicaud J.-M."/>
            <person name="Nikolski M."/>
            <person name="Oztas S."/>
            <person name="Ozier-Kalogeropoulos O."/>
            <person name="Pellenz S."/>
            <person name="Potier S."/>
            <person name="Richard G.-F."/>
            <person name="Straub M.-L."/>
            <person name="Suleau A."/>
            <person name="Swennen D."/>
            <person name="Tekaia F."/>
            <person name="Wesolowski-Louvel M."/>
            <person name="Westhof E."/>
            <person name="Wirth B."/>
            <person name="Zeniou-Meyer M."/>
            <person name="Zivanovic Y."/>
            <person name="Bolotin-Fukuhara M."/>
            <person name="Thierry A."/>
            <person name="Bouchier C."/>
            <person name="Caudron B."/>
            <person name="Scarpelli C."/>
            <person name="Gaillardin C."/>
            <person name="Weissenbach J."/>
            <person name="Wincker P."/>
            <person name="Souciet J.-L."/>
        </authorList>
    </citation>
    <scope>NUCLEOTIDE SEQUENCE [LARGE SCALE GENOMIC DNA]</scope>
    <source>
        <strain>ATCC 8585 / CBS 2359 / DSM 70799 / NBRC 1267 / NRRL Y-1140 / WM37</strain>
    </source>
</reference>
<organism>
    <name type="scientific">Kluyveromyces lactis (strain ATCC 8585 / CBS 2359 / DSM 70799 / NBRC 1267 / NRRL Y-1140 / WM37)</name>
    <name type="common">Yeast</name>
    <name type="synonym">Candida sphaerica</name>
    <dbReference type="NCBI Taxonomy" id="284590"/>
    <lineage>
        <taxon>Eukaryota</taxon>
        <taxon>Fungi</taxon>
        <taxon>Dikarya</taxon>
        <taxon>Ascomycota</taxon>
        <taxon>Saccharomycotina</taxon>
        <taxon>Saccharomycetes</taxon>
        <taxon>Saccharomycetales</taxon>
        <taxon>Saccharomycetaceae</taxon>
        <taxon>Kluyveromyces</taxon>
    </lineage>
</organism>
<feature type="transit peptide" description="Mitochondrion" evidence="1">
    <location>
        <begin position="1"/>
        <end status="unknown"/>
    </location>
</feature>
<feature type="chain" id="PRO_0000030648" description="Small ribosomal subunit protein uS9m">
    <location>
        <begin status="unknown"/>
        <end position="297"/>
    </location>
</feature>
<feature type="region of interest" description="Disordered" evidence="2">
    <location>
        <begin position="278"/>
        <end position="297"/>
    </location>
</feature>
<evidence type="ECO:0000255" key="1"/>
<evidence type="ECO:0000256" key="2">
    <source>
        <dbReference type="SAM" id="MobiDB-lite"/>
    </source>
</evidence>
<evidence type="ECO:0000305" key="3"/>
<gene>
    <name type="primary">MRPS9</name>
    <name type="ordered locus">KLLA0F21032g</name>
</gene>
<protein>
    <recommendedName>
        <fullName evidence="3">Small ribosomal subunit protein uS9m</fullName>
    </recommendedName>
    <alternativeName>
        <fullName>37S ribosomal protein S9, mitochondrial</fullName>
    </alternativeName>
</protein>